<geneLocation type="chloroplast"/>
<organism>
    <name type="scientific">Stigeoclonium helveticum</name>
    <name type="common">Green alga</name>
    <dbReference type="NCBI Taxonomy" id="55999"/>
    <lineage>
        <taxon>Eukaryota</taxon>
        <taxon>Viridiplantae</taxon>
        <taxon>Chlorophyta</taxon>
        <taxon>core chlorophytes</taxon>
        <taxon>Chlorophyceae</taxon>
        <taxon>OCC clade</taxon>
        <taxon>Chaetophorales</taxon>
        <taxon>Chaetophoraceae</taxon>
        <taxon>Stigeoclonium</taxon>
    </lineage>
</organism>
<gene>
    <name evidence="1" type="primary">rps18</name>
</gene>
<sequence length="129" mass="15205">MGTSNTQKPQKQVPKRKKYKNLFSLKTKKKRGKKFSKRKKGGTLTLPVIPPKSIFILLKSRNKKIYDRKIIDYKNRSLLQEYIYFTGKIIPKRKTGITTKQQRYLTKAIKTARILGLLPFVKKEKGFFR</sequence>
<evidence type="ECO:0000255" key="1">
    <source>
        <dbReference type="HAMAP-Rule" id="MF_00270"/>
    </source>
</evidence>
<evidence type="ECO:0000256" key="2">
    <source>
        <dbReference type="SAM" id="MobiDB-lite"/>
    </source>
</evidence>
<evidence type="ECO:0000305" key="3"/>
<keyword id="KW-0150">Chloroplast</keyword>
<keyword id="KW-0934">Plastid</keyword>
<keyword id="KW-0687">Ribonucleoprotein</keyword>
<keyword id="KW-0689">Ribosomal protein</keyword>
<keyword id="KW-0694">RNA-binding</keyword>
<keyword id="KW-0699">rRNA-binding</keyword>
<accession>Q06SF9</accession>
<comment type="subunit">
    <text>Part of the 30S ribosomal subunit.</text>
</comment>
<comment type="subcellular location">
    <subcellularLocation>
        <location>Plastid</location>
        <location>Chloroplast</location>
    </subcellularLocation>
</comment>
<comment type="similarity">
    <text evidence="1">Belongs to the bacterial ribosomal protein bS18 family.</text>
</comment>
<name>RR18_STIHE</name>
<protein>
    <recommendedName>
        <fullName evidence="1">Small ribosomal subunit protein bS18c</fullName>
    </recommendedName>
    <alternativeName>
        <fullName evidence="3">30S ribosomal protein S18, chloroplastic</fullName>
    </alternativeName>
</protein>
<dbReference type="EMBL" id="DQ630521">
    <property type="protein sequence ID" value="ABF60194.1"/>
    <property type="molecule type" value="Genomic_DNA"/>
</dbReference>
<dbReference type="RefSeq" id="YP_764407.1">
    <property type="nucleotide sequence ID" value="NC_008372.1"/>
</dbReference>
<dbReference type="SMR" id="Q06SF9"/>
<dbReference type="GeneID" id="4308374"/>
<dbReference type="GO" id="GO:0009507">
    <property type="term" value="C:chloroplast"/>
    <property type="evidence" value="ECO:0007669"/>
    <property type="project" value="UniProtKB-SubCell"/>
</dbReference>
<dbReference type="GO" id="GO:0005763">
    <property type="term" value="C:mitochondrial small ribosomal subunit"/>
    <property type="evidence" value="ECO:0007669"/>
    <property type="project" value="TreeGrafter"/>
</dbReference>
<dbReference type="GO" id="GO:0070181">
    <property type="term" value="F:small ribosomal subunit rRNA binding"/>
    <property type="evidence" value="ECO:0007669"/>
    <property type="project" value="TreeGrafter"/>
</dbReference>
<dbReference type="GO" id="GO:0003735">
    <property type="term" value="F:structural constituent of ribosome"/>
    <property type="evidence" value="ECO:0007669"/>
    <property type="project" value="InterPro"/>
</dbReference>
<dbReference type="GO" id="GO:0006412">
    <property type="term" value="P:translation"/>
    <property type="evidence" value="ECO:0007669"/>
    <property type="project" value="UniProtKB-UniRule"/>
</dbReference>
<dbReference type="Gene3D" id="4.10.640.10">
    <property type="entry name" value="Ribosomal protein S18"/>
    <property type="match status" value="1"/>
</dbReference>
<dbReference type="HAMAP" id="MF_00270">
    <property type="entry name" value="Ribosomal_bS18"/>
    <property type="match status" value="1"/>
</dbReference>
<dbReference type="InterPro" id="IPR001648">
    <property type="entry name" value="Ribosomal_bS18"/>
</dbReference>
<dbReference type="InterPro" id="IPR036870">
    <property type="entry name" value="Ribosomal_bS18_sf"/>
</dbReference>
<dbReference type="NCBIfam" id="TIGR00165">
    <property type="entry name" value="S18"/>
    <property type="match status" value="1"/>
</dbReference>
<dbReference type="PANTHER" id="PTHR13479">
    <property type="entry name" value="30S RIBOSOMAL PROTEIN S18"/>
    <property type="match status" value="1"/>
</dbReference>
<dbReference type="PANTHER" id="PTHR13479:SF40">
    <property type="entry name" value="SMALL RIBOSOMAL SUBUNIT PROTEIN BS18M"/>
    <property type="match status" value="1"/>
</dbReference>
<dbReference type="Pfam" id="PF01084">
    <property type="entry name" value="Ribosomal_S18"/>
    <property type="match status" value="1"/>
</dbReference>
<dbReference type="PRINTS" id="PR00974">
    <property type="entry name" value="RIBOSOMALS18"/>
</dbReference>
<dbReference type="SUPFAM" id="SSF46911">
    <property type="entry name" value="Ribosomal protein S18"/>
    <property type="match status" value="1"/>
</dbReference>
<reference key="1">
    <citation type="journal article" date="2006" name="Mol. Genet. Genomics">
        <title>Distinctive architecture of the chloroplast genome in the chlorophycean green alga Stigeoclonium helveticum.</title>
        <authorList>
            <person name="Belanger A.-S."/>
            <person name="Brouard J.-S."/>
            <person name="Charlebois P."/>
            <person name="Otis C."/>
            <person name="Lemieux C."/>
            <person name="Turmel M."/>
        </authorList>
    </citation>
    <scope>NUCLEOTIDE SEQUENCE [LARGE SCALE GENOMIC DNA]</scope>
    <source>
        <strain>UTEX 441</strain>
    </source>
</reference>
<proteinExistence type="inferred from homology"/>
<feature type="chain" id="PRO_0000276892" description="Small ribosomal subunit protein bS18c">
    <location>
        <begin position="1"/>
        <end position="129"/>
    </location>
</feature>
<feature type="region of interest" description="Disordered" evidence="2">
    <location>
        <begin position="1"/>
        <end position="20"/>
    </location>
</feature>